<gene>
    <name type="primary">mt</name>
</gene>
<accession>P25127</accession>
<name>MT_ESOLU</name>
<dbReference type="EMBL" id="X59392">
    <property type="protein sequence ID" value="CAA42035.1"/>
    <property type="molecule type" value="mRNA"/>
</dbReference>
<dbReference type="EMBL" id="X70042">
    <property type="protein sequence ID" value="CAA49636.1"/>
    <property type="molecule type" value="Genomic_DNA"/>
</dbReference>
<dbReference type="PIR" id="S38334">
    <property type="entry name" value="S31723"/>
</dbReference>
<dbReference type="SMR" id="P25127"/>
<dbReference type="FunCoup" id="P25127">
    <property type="interactions" value="81"/>
</dbReference>
<dbReference type="STRING" id="8010.ENSELUP00000036627"/>
<dbReference type="Ensembl" id="ENSELUT00000051955.2">
    <property type="protein sequence ID" value="ENSELUP00000060655.1"/>
    <property type="gene ID" value="ENSELUG00000028620.2"/>
</dbReference>
<dbReference type="GeneID" id="105018493"/>
<dbReference type="KEGG" id="els:105018493"/>
<dbReference type="CTD" id="17750"/>
<dbReference type="GeneTree" id="ENSGT00950000182967"/>
<dbReference type="InParanoid" id="P25127"/>
<dbReference type="OMA" id="CKGASEN"/>
<dbReference type="Proteomes" id="UP000265140">
    <property type="component" value="Chromosome 19"/>
</dbReference>
<dbReference type="Bgee" id="ENSELUG00000028620">
    <property type="expression patterns" value="Expressed in ovary and 14 other cell types or tissues"/>
</dbReference>
<dbReference type="GO" id="GO:0046872">
    <property type="term" value="F:metal ion binding"/>
    <property type="evidence" value="ECO:0007669"/>
    <property type="project" value="UniProtKB-KW"/>
</dbReference>
<dbReference type="GO" id="GO:0001525">
    <property type="term" value="P:angiogenesis"/>
    <property type="evidence" value="ECO:0007669"/>
    <property type="project" value="Ensembl"/>
</dbReference>
<dbReference type="GO" id="GO:0090050">
    <property type="term" value="P:positive regulation of cell migration involved in sprouting angiogenesis"/>
    <property type="evidence" value="ECO:0007669"/>
    <property type="project" value="Ensembl"/>
</dbReference>
<dbReference type="GO" id="GO:0010575">
    <property type="term" value="P:positive regulation of vascular endothelial growth factor production"/>
    <property type="evidence" value="ECO:0007669"/>
    <property type="project" value="Ensembl"/>
</dbReference>
<dbReference type="GO" id="GO:0046686">
    <property type="term" value="P:response to cadmium ion"/>
    <property type="evidence" value="ECO:0007669"/>
    <property type="project" value="Ensembl"/>
</dbReference>
<dbReference type="GO" id="GO:0046688">
    <property type="term" value="P:response to copper ion"/>
    <property type="evidence" value="ECO:0000250"/>
    <property type="project" value="AgBase"/>
</dbReference>
<dbReference type="GO" id="GO:0051597">
    <property type="term" value="P:response to methylmercury"/>
    <property type="evidence" value="ECO:0007669"/>
    <property type="project" value="Ensembl"/>
</dbReference>
<dbReference type="GO" id="GO:0010043">
    <property type="term" value="P:response to zinc ion"/>
    <property type="evidence" value="ECO:0007669"/>
    <property type="project" value="Ensembl"/>
</dbReference>
<dbReference type="FunFam" id="4.10.10.10:FF:000001">
    <property type="entry name" value="Metallothionein"/>
    <property type="match status" value="1"/>
</dbReference>
<dbReference type="Gene3D" id="4.10.10.10">
    <property type="entry name" value="Metallothionein Isoform II"/>
    <property type="match status" value="1"/>
</dbReference>
<dbReference type="InterPro" id="IPR017854">
    <property type="entry name" value="Metalthion_dom_sf"/>
</dbReference>
<dbReference type="InterPro" id="IPR023587">
    <property type="entry name" value="Metalthion_dom_sf_vert"/>
</dbReference>
<dbReference type="InterPro" id="IPR000006">
    <property type="entry name" value="Metalthion_vert"/>
</dbReference>
<dbReference type="InterPro" id="IPR018064">
    <property type="entry name" value="Metalthion_vert_metal_BS"/>
</dbReference>
<dbReference type="PANTHER" id="PTHR23299">
    <property type="entry name" value="METALLOTHIONEIN"/>
    <property type="match status" value="1"/>
</dbReference>
<dbReference type="PANTHER" id="PTHR23299:SF24">
    <property type="entry name" value="METALLOTHIONEIN-1X"/>
    <property type="match status" value="1"/>
</dbReference>
<dbReference type="Pfam" id="PF00131">
    <property type="entry name" value="Metallothio"/>
    <property type="match status" value="1"/>
</dbReference>
<dbReference type="PRINTS" id="PR00860">
    <property type="entry name" value="MTVERTEBRATE"/>
</dbReference>
<dbReference type="SUPFAM" id="SSF57868">
    <property type="entry name" value="Metallothionein"/>
    <property type="match status" value="1"/>
</dbReference>
<dbReference type="PROSITE" id="PS00203">
    <property type="entry name" value="METALLOTHIONEIN_VRT"/>
    <property type="match status" value="1"/>
</dbReference>
<reference key="1">
    <citation type="journal article" date="1991" name="Biochim. Biophys. Acta">
        <title>Elucidation of cDNA sequences for metallothioneins from rainbow trout, stone loach and pike liver using the polymerase chain reaction.</title>
        <authorList>
            <person name="Kille P."/>
            <person name="Stephens P.E."/>
            <person name="Kay J."/>
        </authorList>
    </citation>
    <scope>NUCLEOTIDE SEQUENCE [MRNA]</scope>
    <source>
        <tissue>Liver</tissue>
    </source>
</reference>
<reference key="2">
    <citation type="journal article" date="1993" name="Biochim. Biophys. Acta">
        <title>Analysis of regulatory elements flanking metallothionein genes in Cd-tolerant fish (pike and stone loach).</title>
        <authorList>
            <person name="Kille P."/>
            <person name="Kay J."/>
            <person name="Sweeney G.E."/>
        </authorList>
    </citation>
    <scope>NUCLEOTIDE SEQUENCE [GENOMIC DNA]</scope>
</reference>
<organism>
    <name type="scientific">Esox lucius</name>
    <name type="common">Northern pike</name>
    <dbReference type="NCBI Taxonomy" id="8010"/>
    <lineage>
        <taxon>Eukaryota</taxon>
        <taxon>Metazoa</taxon>
        <taxon>Chordata</taxon>
        <taxon>Craniata</taxon>
        <taxon>Vertebrata</taxon>
        <taxon>Euteleostomi</taxon>
        <taxon>Actinopterygii</taxon>
        <taxon>Neopterygii</taxon>
        <taxon>Teleostei</taxon>
        <taxon>Protacanthopterygii</taxon>
        <taxon>Esociformes</taxon>
        <taxon>Esocidae</taxon>
        <taxon>Esox</taxon>
    </lineage>
</organism>
<feature type="chain" id="PRO_0000197283" description="Metallothionein">
    <location>
        <begin position="1"/>
        <end position="60"/>
    </location>
</feature>
<feature type="region of interest" description="Beta">
    <location>
        <begin position="1"/>
        <end position="28"/>
    </location>
</feature>
<feature type="region of interest" description="Alpha">
    <location>
        <begin position="29"/>
        <end position="60"/>
    </location>
</feature>
<feature type="binding site" evidence="2">
    <location>
        <position position="4"/>
    </location>
    <ligand>
        <name>a divalent metal cation</name>
        <dbReference type="ChEBI" id="CHEBI:60240"/>
        <label>1</label>
        <note>in cluster B</note>
    </ligand>
</feature>
<feature type="binding site" evidence="2">
    <location>
        <position position="6"/>
    </location>
    <ligand>
        <name>a divalent metal cation</name>
        <dbReference type="ChEBI" id="CHEBI:60240"/>
        <label>1</label>
        <note>in cluster B</note>
    </ligand>
</feature>
<feature type="binding site" evidence="2">
    <location>
        <position position="6"/>
    </location>
    <ligand>
        <name>a divalent metal cation</name>
        <dbReference type="ChEBI" id="CHEBI:60240"/>
        <label>2</label>
        <note>in cluster B</note>
    </ligand>
</feature>
<feature type="binding site" evidence="2">
    <location>
        <position position="12"/>
    </location>
    <ligand>
        <name>a divalent metal cation</name>
        <dbReference type="ChEBI" id="CHEBI:60240"/>
        <label>2</label>
        <note>in cluster B</note>
    </ligand>
</feature>
<feature type="binding site" evidence="2">
    <location>
        <position position="14"/>
    </location>
    <ligand>
        <name>a divalent metal cation</name>
        <dbReference type="ChEBI" id="CHEBI:60240"/>
        <label>2</label>
        <note>in cluster B</note>
    </ligand>
</feature>
<feature type="binding site" evidence="2">
    <location>
        <position position="14"/>
    </location>
    <ligand>
        <name>a divalent metal cation</name>
        <dbReference type="ChEBI" id="CHEBI:60240"/>
        <label>3</label>
        <note>in cluster B</note>
    </ligand>
</feature>
<feature type="binding site" evidence="2">
    <location>
        <position position="18"/>
    </location>
    <ligand>
        <name>a divalent metal cation</name>
        <dbReference type="ChEBI" id="CHEBI:60240"/>
        <label>3</label>
        <note>in cluster B</note>
    </ligand>
</feature>
<feature type="binding site" evidence="2">
    <location>
        <position position="20"/>
    </location>
    <ligand>
        <name>a divalent metal cation</name>
        <dbReference type="ChEBI" id="CHEBI:60240"/>
        <label>1</label>
        <note>in cluster B</note>
    </ligand>
</feature>
<feature type="binding site" evidence="2">
    <location>
        <position position="23"/>
    </location>
    <ligand>
        <name>a divalent metal cation</name>
        <dbReference type="ChEBI" id="CHEBI:60240"/>
        <label>1</label>
        <note>in cluster B</note>
    </ligand>
</feature>
<feature type="binding site" evidence="2">
    <location>
        <position position="23"/>
    </location>
    <ligand>
        <name>a divalent metal cation</name>
        <dbReference type="ChEBI" id="CHEBI:60240"/>
        <label>3</label>
        <note>in cluster B</note>
    </ligand>
</feature>
<feature type="binding site" evidence="2">
    <location>
        <position position="25"/>
    </location>
    <ligand>
        <name>a divalent metal cation</name>
        <dbReference type="ChEBI" id="CHEBI:60240"/>
        <label>2</label>
        <note>in cluster B</note>
    </ligand>
</feature>
<feature type="binding site" evidence="2">
    <location>
        <position position="28"/>
    </location>
    <ligand>
        <name>a divalent metal cation</name>
        <dbReference type="ChEBI" id="CHEBI:60240"/>
        <label>3</label>
        <note>in cluster B</note>
    </ligand>
</feature>
<feature type="binding site" evidence="2">
    <location>
        <position position="32"/>
    </location>
    <ligand>
        <name>a divalent metal cation</name>
        <dbReference type="ChEBI" id="CHEBI:60240"/>
        <label>4</label>
        <note>in cluster A</note>
    </ligand>
</feature>
<feature type="binding site" evidence="2">
    <location>
        <position position="33"/>
    </location>
    <ligand>
        <name>a divalent metal cation</name>
        <dbReference type="ChEBI" id="CHEBI:60240"/>
        <label>4</label>
        <note>in cluster A</note>
    </ligand>
</feature>
<feature type="binding site" evidence="2">
    <location>
        <position position="33"/>
    </location>
    <ligand>
        <name>a divalent metal cation</name>
        <dbReference type="ChEBI" id="CHEBI:60240"/>
        <label>5</label>
        <note>in cluster A</note>
    </ligand>
</feature>
<feature type="binding site" evidence="2">
    <location>
        <position position="35"/>
    </location>
    <ligand>
        <name>a divalent metal cation</name>
        <dbReference type="ChEBI" id="CHEBI:60240"/>
        <label>5</label>
        <note>in cluster A</note>
    </ligand>
</feature>
<feature type="binding site" evidence="2">
    <location>
        <position position="36"/>
    </location>
    <ligand>
        <name>a divalent metal cation</name>
        <dbReference type="ChEBI" id="CHEBI:60240"/>
        <label>5</label>
        <note>in cluster A</note>
    </ligand>
</feature>
<feature type="binding site" evidence="2">
    <location>
        <position position="36"/>
    </location>
    <ligand>
        <name>a divalent metal cation</name>
        <dbReference type="ChEBI" id="CHEBI:60240"/>
        <label>6</label>
        <note>in cluster A</note>
    </ligand>
</feature>
<feature type="binding site" evidence="2">
    <location>
        <position position="40"/>
    </location>
    <ligand>
        <name>a divalent metal cation</name>
        <dbReference type="ChEBI" id="CHEBI:60240"/>
        <label>6</label>
        <note>in cluster A</note>
    </ligand>
</feature>
<feature type="binding site" evidence="2">
    <location>
        <position position="43"/>
    </location>
    <ligand>
        <name>a divalent metal cation</name>
        <dbReference type="ChEBI" id="CHEBI:60240"/>
        <label>4</label>
        <note>in cluster A</note>
    </ligand>
</feature>
<feature type="binding site" evidence="2">
    <location>
        <position position="43"/>
    </location>
    <ligand>
        <name>a divalent metal cation</name>
        <dbReference type="ChEBI" id="CHEBI:60240"/>
        <label>6</label>
        <note>in cluster A</note>
    </ligand>
</feature>
<feature type="binding site" evidence="2">
    <location>
        <position position="47"/>
    </location>
    <ligand>
        <name>a divalent metal cation</name>
        <dbReference type="ChEBI" id="CHEBI:60240"/>
        <label>4</label>
        <note>in cluster A</note>
    </ligand>
</feature>
<feature type="binding site" evidence="2">
    <location>
        <position position="49"/>
    </location>
    <ligand>
        <name>a divalent metal cation</name>
        <dbReference type="ChEBI" id="CHEBI:60240"/>
        <label>5</label>
        <note>in cluster A</note>
    </ligand>
</feature>
<feature type="binding site" evidence="2">
    <location>
        <position position="49"/>
    </location>
    <ligand>
        <name>a divalent metal cation</name>
        <dbReference type="ChEBI" id="CHEBI:60240"/>
        <label>7</label>
        <note>in cluster A</note>
    </ligand>
</feature>
<feature type="binding site" evidence="3">
    <location>
        <position position="54"/>
    </location>
    <ligand>
        <name>a divalent metal cation</name>
        <dbReference type="ChEBI" id="CHEBI:60240"/>
        <label>7</label>
        <note>in cluster A</note>
    </ligand>
</feature>
<feature type="binding site" evidence="2">
    <location>
        <position position="58"/>
    </location>
    <ligand>
        <name>a divalent metal cation</name>
        <dbReference type="ChEBI" id="CHEBI:60240"/>
        <label>7</label>
        <note>in cluster A</note>
    </ligand>
</feature>
<feature type="binding site" evidence="2">
    <location>
        <position position="59"/>
    </location>
    <ligand>
        <name>a divalent metal cation</name>
        <dbReference type="ChEBI" id="CHEBI:60240"/>
        <label>6</label>
        <note>in cluster A</note>
    </ligand>
</feature>
<feature type="binding site" evidence="2">
    <location>
        <position position="59"/>
    </location>
    <ligand>
        <name>a divalent metal cation</name>
        <dbReference type="ChEBI" id="CHEBI:60240"/>
        <label>7</label>
        <note>in cluster A</note>
    </ligand>
</feature>
<comment type="function">
    <text evidence="1">Metallothioneins have a high content of cysteine residues that bind various heavy metals.</text>
</comment>
<comment type="domain">
    <text>Class I metallothioneins contain 2 metal-binding domains: four divalent ions are chelated within cluster A of the alpha domain and are coordinated via cysteinyl thiolate bridges to 11 cysteine ligands. Cluster B, the corresponding region within the beta domain, can ligate three divalent ions to 9 cysteines.</text>
</comment>
<comment type="similarity">
    <text evidence="4">Belongs to the metallothionein superfamily. Type 1 family.</text>
</comment>
<keyword id="KW-0479">Metal-binding</keyword>
<keyword id="KW-0480">Metal-thiolate cluster</keyword>
<keyword id="KW-1185">Reference proteome</keyword>
<sequence length="60" mass="5979">MDPCECSKTGSCNCGGSCKCSNCACTSCKKSCCSCCPSGCSKCASGCICKGKTCDTSCCQ</sequence>
<proteinExistence type="inferred from homology"/>
<protein>
    <recommendedName>
        <fullName>Metallothionein</fullName>
        <shortName>MT</shortName>
    </recommendedName>
</protein>
<evidence type="ECO:0000250" key="1"/>
<evidence type="ECO:0000250" key="2">
    <source>
        <dbReference type="UniProtKB" id="P02795"/>
    </source>
</evidence>
<evidence type="ECO:0000250" key="3">
    <source>
        <dbReference type="UniProtKB" id="P62339"/>
    </source>
</evidence>
<evidence type="ECO:0000305" key="4"/>